<accession>Q2L9X0</accession>
<name>RSSA_CHLAE</name>
<evidence type="ECO:0000250" key="1">
    <source>
        <dbReference type="UniProtKB" id="P08865"/>
    </source>
</evidence>
<evidence type="ECO:0000250" key="2">
    <source>
        <dbReference type="UniProtKB" id="P14206"/>
    </source>
</evidence>
<evidence type="ECO:0000255" key="3">
    <source>
        <dbReference type="HAMAP-Rule" id="MF_03016"/>
    </source>
</evidence>
<evidence type="ECO:0000256" key="4">
    <source>
        <dbReference type="SAM" id="MobiDB-lite"/>
    </source>
</evidence>
<evidence type="ECO:0000305" key="5"/>
<feature type="initiator methionine" description="Removed" evidence="3">
    <location>
        <position position="1"/>
    </location>
</feature>
<feature type="chain" id="PRO_0000271750" description="Small ribosomal subunit protein uS2">
    <location>
        <begin position="2"/>
        <end position="295"/>
    </location>
</feature>
<feature type="repeat" description="[DE]-W-[ST] 1">
    <location>
        <begin position="230"/>
        <end position="232"/>
    </location>
</feature>
<feature type="repeat" description="[DE]-W-[ST] 2">
    <location>
        <begin position="247"/>
        <end position="249"/>
    </location>
</feature>
<feature type="repeat" description="[DE]-W-[ST] 3">
    <location>
        <begin position="266"/>
        <end position="268"/>
    </location>
</feature>
<feature type="repeat" description="[DE]-W-[ST] 4">
    <location>
        <begin position="275"/>
        <end position="277"/>
    </location>
</feature>
<feature type="repeat" description="[DE]-W-[ST] 5">
    <location>
        <begin position="293"/>
        <end position="295"/>
    </location>
</feature>
<feature type="region of interest" description="Interaction with PPP1R16B" evidence="3">
    <location>
        <begin position="54"/>
        <end position="113"/>
    </location>
</feature>
<feature type="region of interest" description="Laminin-binding" evidence="3">
    <location>
        <begin position="161"/>
        <end position="180"/>
    </location>
</feature>
<feature type="region of interest" description="Laminin-binding" evidence="3">
    <location>
        <begin position="205"/>
        <end position="229"/>
    </location>
</feature>
<feature type="region of interest" description="Laminin-binding" evidence="3">
    <location>
        <begin position="242"/>
        <end position="295"/>
    </location>
</feature>
<feature type="region of interest" description="Disordered" evidence="4">
    <location>
        <begin position="266"/>
        <end position="295"/>
    </location>
</feature>
<feature type="site" description="Cleavage; by ST3; site 1" evidence="3">
    <location>
        <begin position="115"/>
        <end position="116"/>
    </location>
</feature>
<feature type="site" description="Cleavage; by ST3; site 2" evidence="3">
    <location>
        <begin position="133"/>
        <end position="134"/>
    </location>
</feature>
<feature type="modified residue" description="N-acetylserine" evidence="1 3">
    <location>
        <position position="2"/>
    </location>
</feature>
<feature type="modified residue" description="Phosphoserine" evidence="1">
    <location>
        <position position="43"/>
    </location>
</feature>
<feature type="modified residue" description="N6-acetyllysine" evidence="1">
    <location>
        <position position="52"/>
    </location>
</feature>
<feature type="modified residue" description="N6-acetyllysine; alternate" evidence="2">
    <location>
        <position position="89"/>
    </location>
</feature>
<feature type="modified residue" description="Phosphothreonine" evidence="1">
    <location>
        <position position="97"/>
    </location>
</feature>
<feature type="cross-link" description="Glycyl lysine isopeptide (Lys-Gly) (interchain with G-Cter in SUMO2); alternate" evidence="1">
    <location>
        <position position="89"/>
    </location>
</feature>
<organism>
    <name type="scientific">Chlorocebus aethiops</name>
    <name type="common">Green monkey</name>
    <name type="synonym">Cercopithecus aethiops</name>
    <dbReference type="NCBI Taxonomy" id="9534"/>
    <lineage>
        <taxon>Eukaryota</taxon>
        <taxon>Metazoa</taxon>
        <taxon>Chordata</taxon>
        <taxon>Craniata</taxon>
        <taxon>Vertebrata</taxon>
        <taxon>Euteleostomi</taxon>
        <taxon>Mammalia</taxon>
        <taxon>Eutheria</taxon>
        <taxon>Euarchontoglires</taxon>
        <taxon>Primates</taxon>
        <taxon>Haplorrhini</taxon>
        <taxon>Catarrhini</taxon>
        <taxon>Cercopithecidae</taxon>
        <taxon>Cercopithecinae</taxon>
        <taxon>Chlorocebus</taxon>
    </lineage>
</organism>
<gene>
    <name evidence="3" type="primary">RPSA</name>
    <name type="synonym">LAMR1</name>
</gene>
<keyword id="KW-0007">Acetylation</keyword>
<keyword id="KW-1003">Cell membrane</keyword>
<keyword id="KW-0963">Cytoplasm</keyword>
<keyword id="KW-1017">Isopeptide bond</keyword>
<keyword id="KW-0472">Membrane</keyword>
<keyword id="KW-0539">Nucleus</keyword>
<keyword id="KW-0597">Phosphoprotein</keyword>
<keyword id="KW-0675">Receptor</keyword>
<keyword id="KW-0677">Repeat</keyword>
<keyword id="KW-0687">Ribonucleoprotein</keyword>
<keyword id="KW-0689">Ribosomal protein</keyword>
<keyword id="KW-0832">Ubl conjugation</keyword>
<reference key="1">
    <citation type="submission" date="2005-12" db="EMBL/GenBank/DDBJ databases">
        <title>Cloning of African green monkey laminin receptor 1 cDNA.</title>
        <authorList>
            <person name="Zhu X."/>
            <person name="Zhang Q."/>
            <person name="Huang P."/>
        </authorList>
    </citation>
    <scope>NUCLEOTIDE SEQUENCE [MRNA]</scope>
    <source>
        <tissue>Kidney</tissue>
    </source>
</reference>
<dbReference type="EMBL" id="DQ343296">
    <property type="protein sequence ID" value="ABC69238.1"/>
    <property type="molecule type" value="mRNA"/>
</dbReference>
<dbReference type="SMR" id="Q2L9X0"/>
<dbReference type="GO" id="GO:0022627">
    <property type="term" value="C:cytosolic small ribosomal subunit"/>
    <property type="evidence" value="ECO:0007669"/>
    <property type="project" value="UniProtKB-UniRule"/>
</dbReference>
<dbReference type="GO" id="GO:0005634">
    <property type="term" value="C:nucleus"/>
    <property type="evidence" value="ECO:0007669"/>
    <property type="project" value="UniProtKB-SubCell"/>
</dbReference>
<dbReference type="GO" id="GO:0005886">
    <property type="term" value="C:plasma membrane"/>
    <property type="evidence" value="ECO:0000250"/>
    <property type="project" value="UniProtKB"/>
</dbReference>
<dbReference type="GO" id="GO:0043236">
    <property type="term" value="F:laminin binding"/>
    <property type="evidence" value="ECO:0007669"/>
    <property type="project" value="UniProtKB-UniRule"/>
</dbReference>
<dbReference type="GO" id="GO:0005055">
    <property type="term" value="F:laminin receptor activity"/>
    <property type="evidence" value="ECO:0007669"/>
    <property type="project" value="UniProtKB-UniRule"/>
</dbReference>
<dbReference type="GO" id="GO:0003735">
    <property type="term" value="F:structural constituent of ribosome"/>
    <property type="evidence" value="ECO:0007669"/>
    <property type="project" value="UniProtKB-UniRule"/>
</dbReference>
<dbReference type="GO" id="GO:0000028">
    <property type="term" value="P:ribosomal small subunit assembly"/>
    <property type="evidence" value="ECO:0007669"/>
    <property type="project" value="UniProtKB-UniRule"/>
</dbReference>
<dbReference type="GO" id="GO:0006412">
    <property type="term" value="P:translation"/>
    <property type="evidence" value="ECO:0007669"/>
    <property type="project" value="UniProtKB-UniRule"/>
</dbReference>
<dbReference type="CDD" id="cd01425">
    <property type="entry name" value="RPS2"/>
    <property type="match status" value="1"/>
</dbReference>
<dbReference type="FunFam" id="3.40.50.10490:FF:000012">
    <property type="entry name" value="40S ribosomal protein SA"/>
    <property type="match status" value="1"/>
</dbReference>
<dbReference type="Gene3D" id="3.40.50.10490">
    <property type="entry name" value="Glucose-6-phosphate isomerase like protein, domain 1"/>
    <property type="match status" value="1"/>
</dbReference>
<dbReference type="HAMAP" id="MF_03015">
    <property type="entry name" value="Ribosomal_S2_euk"/>
    <property type="match status" value="1"/>
</dbReference>
<dbReference type="HAMAP" id="MF_03016">
    <property type="entry name" value="Ribosomal_S2_laminin_receptor"/>
    <property type="match status" value="1"/>
</dbReference>
<dbReference type="InterPro" id="IPR001865">
    <property type="entry name" value="Ribosomal_uS2"/>
</dbReference>
<dbReference type="InterPro" id="IPR032281">
    <property type="entry name" value="Ribosomal_uS2_C"/>
</dbReference>
<dbReference type="InterPro" id="IPR018130">
    <property type="entry name" value="Ribosomal_uS2_CS"/>
</dbReference>
<dbReference type="InterPro" id="IPR027498">
    <property type="entry name" value="Ribosomal_uS2_euk"/>
</dbReference>
<dbReference type="InterPro" id="IPR005707">
    <property type="entry name" value="Ribosomal_uS2_euk/arc"/>
</dbReference>
<dbReference type="InterPro" id="IPR023591">
    <property type="entry name" value="Ribosomal_uS2_flav_dom_sf"/>
</dbReference>
<dbReference type="InterPro" id="IPR027504">
    <property type="entry name" value="Ribosomal_uS2_vert"/>
</dbReference>
<dbReference type="NCBIfam" id="TIGR01012">
    <property type="entry name" value="uS2_euk_arch"/>
    <property type="match status" value="1"/>
</dbReference>
<dbReference type="PANTHER" id="PTHR11489">
    <property type="entry name" value="40S RIBOSOMAL PROTEIN SA"/>
    <property type="match status" value="1"/>
</dbReference>
<dbReference type="Pfam" id="PF16122">
    <property type="entry name" value="40S_SA_C"/>
    <property type="match status" value="1"/>
</dbReference>
<dbReference type="Pfam" id="PF00318">
    <property type="entry name" value="Ribosomal_S2"/>
    <property type="match status" value="2"/>
</dbReference>
<dbReference type="PRINTS" id="PR00395">
    <property type="entry name" value="RIBOSOMALS2"/>
</dbReference>
<dbReference type="SUPFAM" id="SSF52313">
    <property type="entry name" value="Ribosomal protein S2"/>
    <property type="match status" value="1"/>
</dbReference>
<dbReference type="PROSITE" id="PS00962">
    <property type="entry name" value="RIBOSOMAL_S2_1"/>
    <property type="match status" value="1"/>
</dbReference>
<dbReference type="PROSITE" id="PS00963">
    <property type="entry name" value="RIBOSOMAL_S2_2"/>
    <property type="match status" value="1"/>
</dbReference>
<comment type="function">
    <text evidence="3">Required for the assembly and/or stability of the 40S ribosomal subunit. Required for the processing of the 20S rRNA-precursor to mature 18S rRNA in a late step of the maturation of 40S ribosomal subunits. Also functions as a cell surface receptor for laminin. Plays a role in cell adhesion to the basement membrane and in the consequent activation of signaling transduction pathways. May play a role in cell fate determination and tissue morphogenesis. Also acts as a receptor for several other ligands, including the pathogenic prion protein, viruses, and bacteria. Acts as a PPP1R16B-dependent substrate of PPP1CA.</text>
</comment>
<comment type="subunit">
    <text evidence="3">Monomer (37LRP) and homodimer (67LR). Component of the small ribosomal subunit. Mature ribosomes consist of a small (40S) and a large (60S) subunit. The 40S subunit contains about 33 different proteins and 1 molecule of RNA (18S). The 60S subunit contains about 49 different proteins and 3 molecules of RNA (28S, 5.8S and 5S). Interacts with RPS21. Interacts with several laminins including at least LAMB1. Interacts with MDK. The mature dimeric form interacts with PPP1R16B (via its fourth ankyrin repeat). Interacts with PPP1CA only in the presence of PPP1R16B.</text>
</comment>
<comment type="subcellular location">
    <subcellularLocation>
        <location evidence="3">Cell membrane</location>
    </subcellularLocation>
    <subcellularLocation>
        <location>Cytoplasm</location>
    </subcellularLocation>
    <subcellularLocation>
        <location evidence="3">Nucleus</location>
    </subcellularLocation>
    <text evidence="3">67LR is found at the surface of the plasma membrane, with its C-terminal laminin-binding domain accessible to extracellular ligands. 37LRP is found at the cell surface, in the cytoplasm and in the nucleus. Colocalizes with PPP1R16B in the cell membrane (By similarity).</text>
</comment>
<comment type="PTM">
    <text evidence="3">Acylated. Acylation may be a prerequisite for conversion of the monomeric 37 kDa laminin receptor precursor (37LRP) to the mature dimeric 67 kDa laminin receptor (67LR), and may provide a mechanism for membrane association.</text>
</comment>
<comment type="PTM">
    <text evidence="3">Cleaved by stromelysin-3 (ST3) at the cell surface. Cleavage by stromelysin-3 may be a mechanism to alter cell-extracellular matrix interactions.</text>
</comment>
<comment type="miscellaneous">
    <text>This protein appears to have acquired a second function as a laminin receptor specifically in the vertebrate lineage.</text>
</comment>
<comment type="miscellaneous">
    <text>It is thought that in vertebrates 37/67 kDa laminin receptor acquired a dual function during evolution. It developed from the ribosomal protein SA, playing an essential role in the protein biosynthesis lacking any laminin binding activity, to a cell surface receptor with laminin binding activity.</text>
</comment>
<comment type="similarity">
    <text evidence="3">Belongs to the universal ribosomal protein uS2 family.</text>
</comment>
<proteinExistence type="evidence at transcript level"/>
<protein>
    <recommendedName>
        <fullName evidence="3">Small ribosomal subunit protein uS2</fullName>
    </recommendedName>
    <alternativeName>
        <fullName evidence="3">37 kDa laminin receptor precursor</fullName>
        <shortName evidence="3">37LRP</shortName>
    </alternativeName>
    <alternativeName>
        <fullName evidence="3">37/67 kDa laminin receptor</fullName>
        <shortName evidence="3">LRP/LR</shortName>
    </alternativeName>
    <alternativeName>
        <fullName evidence="5">40S ribosomal protein SA</fullName>
    </alternativeName>
    <alternativeName>
        <fullName evidence="3">67 kDa laminin receptor</fullName>
        <shortName evidence="3">67LR</shortName>
    </alternativeName>
    <alternativeName>
        <fullName evidence="3">Laminin receptor 1</fullName>
        <shortName evidence="3">LamR</shortName>
    </alternativeName>
    <alternativeName>
        <fullName evidence="3">Laminin-binding protein precursor p40</fullName>
        <shortName evidence="3">LBP/p40</shortName>
    </alternativeName>
</protein>
<sequence>MSGALDVLQMKEEDVLKFLAAGTHLGGTNLDFQMEQYIYKRKSDGIYIINLKRTWEKLLLAARAIVAIENPADVSVISSRNTGQRAVLKFAAATGATPIAGRFTPGTFTNQIQAAFREPRLLVVTDPRADHQPLTEASYVNLPTIALCNTDSPLRYVDIAIPCNNKGAHSVGLMWWMLAREVLRMRGTISREHPWEVMPDLYFYRDPEEIEKEEQAAAEKAVTKEEFQGEWTAPAPEFTATQPEVADWSEGVQVPSVPIQQFPTEDWSAQPATEDWSAAPTAQATEWVGATTEWS</sequence>